<sequence>MAKRVFFSFHYQDVIDFRVNVVRNHWVTKLNQSAAGVFDASLWEDAKKTSDIALKRLINGGLNNTSVTCVLIGSQTFNRRWVRYEIMKSIEKGNKIIGIHINAFKDKYGNIKSKGPNPFDYLGYQYSSDGKQLHLYEWTGGKWEEYKDLAPYRVNQIAPESLRGKFYSLSSVYRVYDWVADDGYNKFSSWVN</sequence>
<evidence type="ECO:0000250" key="1">
    <source>
        <dbReference type="UniProtKB" id="J8CSK2"/>
    </source>
</evidence>
<evidence type="ECO:0000269" key="2">
    <source>
    </source>
</evidence>
<evidence type="ECO:0000269" key="3">
    <source>
    </source>
</evidence>
<evidence type="ECO:0000269" key="4">
    <source>
    </source>
</evidence>
<evidence type="ECO:0000303" key="5">
    <source>
    </source>
</evidence>
<evidence type="ECO:0000305" key="6"/>
<evidence type="ECO:0000305" key="7">
    <source>
    </source>
</evidence>
<evidence type="ECO:0000312" key="8">
    <source>
        <dbReference type="EMBL" id="EJR09241.1"/>
    </source>
</evidence>
<evidence type="ECO:0007744" key="9">
    <source>
        <dbReference type="PDB" id="6LHY"/>
    </source>
</evidence>
<evidence type="ECO:0007829" key="10">
    <source>
        <dbReference type="PDB" id="6LHY"/>
    </source>
</evidence>
<keyword id="KW-0002">3D-structure</keyword>
<keyword id="KW-0051">Antiviral defense</keyword>
<keyword id="KW-0963">Cytoplasm</keyword>
<keyword id="KW-0378">Hydrolase</keyword>
<keyword id="KW-0520">NAD</keyword>
<protein>
    <recommendedName>
        <fullName evidence="6">Putative cyclic ADP-D-ribose synthase ThsB1</fullName>
        <shortName evidence="6">Putative cADPR synthase ThsB1</shortName>
        <ecNumber evidence="1">3.2.2.-</ecNumber>
    </recommendedName>
    <alternativeName>
        <fullName evidence="5">Thoeris protein ThsB</fullName>
    </alternativeName>
</protein>
<reference evidence="8" key="1">
    <citation type="submission" date="2012-04" db="EMBL/GenBank/DDBJ databases">
        <title>The Genome Sequence of Bacillus cereus MSX-D12.</title>
        <authorList>
            <consortium name="The Broad Institute Genome Sequencing Platform"/>
            <consortium name="The Broad Institute Genome Sequencing Center for Infectious Disease"/>
            <person name="Feldgarden M."/>
            <person name="Van der Auwera G.A."/>
            <person name="Mahillon J."/>
            <person name="Duprez V."/>
            <person name="Timmery S."/>
            <person name="Mattelet C."/>
            <person name="Dierick K."/>
            <person name="Sun M."/>
            <person name="Yu Z."/>
            <person name="Zhu L."/>
            <person name="Hu X."/>
            <person name="Shank E.B."/>
            <person name="Swiecicka I."/>
            <person name="Hansen B.M."/>
            <person name="Andrup L."/>
            <person name="Young S.K."/>
            <person name="Zeng Q."/>
            <person name="Gargeya S."/>
            <person name="Fitzgerald M."/>
            <person name="Haas B."/>
            <person name="Abouelleil A."/>
            <person name="Alvarado L."/>
            <person name="Arachchi H.M."/>
            <person name="Berlin A."/>
            <person name="Chapman S.B."/>
            <person name="Goldberg J."/>
            <person name="Griggs A."/>
            <person name="Gujja S."/>
            <person name="Hansen M."/>
            <person name="Howarth C."/>
            <person name="Imamovic A."/>
            <person name="Larimer J."/>
            <person name="McCowen C."/>
            <person name="Montmayeur A."/>
            <person name="Murphy C."/>
            <person name="Neiman D."/>
            <person name="Pearson M."/>
            <person name="Priest M."/>
            <person name="Roberts A."/>
            <person name="Saif S."/>
            <person name="Shea T."/>
            <person name="Sisk P."/>
            <person name="Sykes S."/>
            <person name="Wortman J."/>
            <person name="Nusbaum C."/>
            <person name="Birren B."/>
        </authorList>
    </citation>
    <scope>NUCLEOTIDE SEQUENCE [LARGE SCALE GENOMIC DNA]</scope>
    <source>
        <strain>MSX-D12</strain>
    </source>
</reference>
<reference key="2">
    <citation type="journal article" date="2018" name="Science">
        <title>Systematic discovery of antiphage defense systems in the microbial pangenome.</title>
        <authorList>
            <person name="Doron S."/>
            <person name="Melamed S."/>
            <person name="Ofir G."/>
            <person name="Leavitt A."/>
            <person name="Lopatina A."/>
            <person name="Keren M."/>
            <person name="Amitai G."/>
            <person name="Sorek R."/>
        </authorList>
    </citation>
    <scope>FUNCTION IN ANTIVIRAL DEFENSE</scope>
    <scope>DISRUPTION PHENOTYPE</scope>
    <scope>EXPRESSION IN B.SUBTILIS</scope>
    <source>
        <strain>MSX-D12</strain>
    </source>
</reference>
<reference key="3">
    <citation type="journal article" date="2021" name="Nature">
        <title>Antiviral activity of bacterial TIR domains via immune signalling molecules.</title>
        <authorList>
            <person name="Ofir G."/>
            <person name="Herbst E."/>
            <person name="Baroz M."/>
            <person name="Cohen D."/>
            <person name="Millman A."/>
            <person name="Doron S."/>
            <person name="Tal N."/>
            <person name="Malheiro D.B.A."/>
            <person name="Malitsky S."/>
            <person name="Amitai G."/>
            <person name="Sorek R."/>
        </authorList>
    </citation>
    <scope>FUNCTION IN ANTIVIRAL DEFENSE</scope>
    <scope>FUNCTION</scope>
    <scope>ACTIVITY REGULATION</scope>
    <scope>MUTAGENESIS OF GLU-85</scope>
    <source>
        <strain>MSX-D12</strain>
    </source>
</reference>
<reference evidence="9" key="4">
    <citation type="journal article" date="2020" name="Nat. Commun.">
        <title>Structural and functional evidence of bacterial antiphage protection by Thoeris defense system via NAD+ degradation.</title>
        <authorList>
            <person name="Ka D."/>
            <person name="Oh H."/>
            <person name="Park E."/>
            <person name="Kim J.H."/>
            <person name="Bae E."/>
        </authorList>
    </citation>
    <scope>X-RAY CRYSTALLOGRAPHY (1.80 ANGSTROMS)</scope>
    <scope>SUBUNIT</scope>
    <scope>DOMAIN</scope>
    <source>
        <strain>MSX-D12</strain>
    </source>
</reference>
<dbReference type="EC" id="3.2.2.-" evidence="1"/>
<dbReference type="EMBL" id="AHEQ01000050">
    <property type="protein sequence ID" value="EJR09241.1"/>
    <property type="molecule type" value="Genomic_DNA"/>
</dbReference>
<dbReference type="PDB" id="6LHY">
    <property type="method" value="X-ray"/>
    <property type="resolution" value="1.80 A"/>
    <property type="chains" value="A/B=1-192"/>
</dbReference>
<dbReference type="PDB" id="9B7D">
    <property type="method" value="X-ray"/>
    <property type="resolution" value="1.80 A"/>
    <property type="chains" value="A/C=1-192"/>
</dbReference>
<dbReference type="PDBsum" id="6LHY"/>
<dbReference type="PDBsum" id="9B7D"/>
<dbReference type="SMR" id="J8G8J6"/>
<dbReference type="PATRIC" id="fig|1053222.3.peg.5516"/>
<dbReference type="HOGENOM" id="CLU_098991_0_0_9"/>
<dbReference type="GO" id="GO:0005737">
    <property type="term" value="C:cytoplasm"/>
    <property type="evidence" value="ECO:0007669"/>
    <property type="project" value="UniProtKB-SubCell"/>
</dbReference>
<dbReference type="GO" id="GO:0016787">
    <property type="term" value="F:hydrolase activity"/>
    <property type="evidence" value="ECO:0007669"/>
    <property type="project" value="UniProtKB-KW"/>
</dbReference>
<dbReference type="GO" id="GO:0051607">
    <property type="term" value="P:defense response to virus"/>
    <property type="evidence" value="ECO:0007669"/>
    <property type="project" value="UniProtKB-KW"/>
</dbReference>
<dbReference type="Gene3D" id="3.40.50.11200">
    <property type="match status" value="1"/>
</dbReference>
<dbReference type="InterPro" id="IPR015032">
    <property type="entry name" value="ThsB__TIR-like_domain"/>
</dbReference>
<dbReference type="InterPro" id="IPR036490">
    <property type="entry name" value="ThsB_TIR-like_sf"/>
</dbReference>
<dbReference type="Pfam" id="PF08937">
    <property type="entry name" value="ThsB_TIR"/>
    <property type="match status" value="1"/>
</dbReference>
<dbReference type="SUPFAM" id="SSF52206">
    <property type="entry name" value="Hypothetical protein MTH538"/>
    <property type="match status" value="1"/>
</dbReference>
<proteinExistence type="evidence at protein level"/>
<feature type="chain" id="PRO_0000456260" description="Putative cyclic ADP-D-ribose synthase ThsB1">
    <location>
        <begin position="1"/>
        <end position="192"/>
    </location>
</feature>
<feature type="mutagenesis site" description="No longer confers resistance to phage SPO1, no change in NAD(+) levels during SPO1 infection. Does not generate the signal molecule." evidence="4">
    <original>E</original>
    <variation>Q</variation>
    <location>
        <position position="85"/>
    </location>
</feature>
<feature type="strand" evidence="10">
    <location>
        <begin position="5"/>
        <end position="8"/>
    </location>
</feature>
<feature type="helix" evidence="10">
    <location>
        <begin position="11"/>
        <end position="15"/>
    </location>
</feature>
<feature type="helix" evidence="10">
    <location>
        <begin position="19"/>
        <end position="27"/>
    </location>
</feature>
<feature type="helix" evidence="10">
    <location>
        <begin position="53"/>
        <end position="62"/>
    </location>
</feature>
<feature type="strand" evidence="10">
    <location>
        <begin position="66"/>
        <end position="72"/>
    </location>
</feature>
<feature type="helix" evidence="10">
    <location>
        <begin position="76"/>
        <end position="78"/>
    </location>
</feature>
<feature type="helix" evidence="10">
    <location>
        <begin position="80"/>
        <end position="92"/>
    </location>
</feature>
<feature type="strand" evidence="10">
    <location>
        <begin position="95"/>
        <end position="100"/>
    </location>
</feature>
<feature type="helix" evidence="10">
    <location>
        <begin position="118"/>
        <end position="121"/>
    </location>
</feature>
<feature type="strand" evidence="10">
    <location>
        <begin position="122"/>
        <end position="126"/>
    </location>
</feature>
<feature type="strand" evidence="10">
    <location>
        <begin position="130"/>
        <end position="138"/>
    </location>
</feature>
<feature type="strand" evidence="10">
    <location>
        <begin position="140"/>
        <end position="145"/>
    </location>
</feature>
<feature type="strand" evidence="10">
    <location>
        <begin position="147"/>
        <end position="149"/>
    </location>
</feature>
<feature type="helix" evidence="10">
    <location>
        <begin position="160"/>
        <end position="162"/>
    </location>
</feature>
<feature type="strand" evidence="10">
    <location>
        <begin position="166"/>
        <end position="168"/>
    </location>
</feature>
<feature type="helix" evidence="10">
    <location>
        <begin position="169"/>
        <end position="171"/>
    </location>
</feature>
<feature type="strand" evidence="10">
    <location>
        <begin position="173"/>
        <end position="177"/>
    </location>
</feature>
<feature type="turn" evidence="10">
    <location>
        <begin position="178"/>
        <end position="182"/>
    </location>
</feature>
<feature type="helix" evidence="10">
    <location>
        <begin position="183"/>
        <end position="190"/>
    </location>
</feature>
<accession>J8G8J6</accession>
<name>THSB1_BACCS</name>
<gene>
    <name evidence="6" type="primary">thsB1</name>
    <name evidence="5" type="synonym">thsB</name>
    <name evidence="8" type="ORF">II9_05449</name>
</gene>
<comment type="function">
    <text evidence="1 2 3 4">TIR-like domain-containing component of the Thoeris antiviral defense system, composed of ThsA and ThsB. Expression of ThsA and ThsB in B.subtilis (strain BEST7003) confers resistance to phages SBSphiC, SBSphiJ and SPO1 (PubMed:29371424, PubMed:34853457). Phage infection activates this protein so that 30 to 45 minutes post-infection with phage SPO1 it generates a signal molecule that in turn activates the NAD(+) hydrolase activity of ThsA. The signal is similar to cyclic ADP-D-ribose, but how it differs is unknown (PubMed:34853457). In vitro purified (but unactivated) ThsB has no NAD(+) hydrolyzing activity, no activity on AMP, CMP, GMP or UMP, does not alter the activity of ThsA, does not bind DNA (PubMed:32499527). Hydrolyzes NAD(+) to make a cyclic ADP-D-ribose (cADPR) signaling molecule; might make 3'cADPR (By similarity).</text>
</comment>
<comment type="activity regulation">
    <text evidence="7">Activated upon phage infection.</text>
</comment>
<comment type="subunit">
    <text evidence="3">Monomer; not seen to interact with ThsA.</text>
</comment>
<comment type="subcellular location">
    <subcellularLocation>
        <location evidence="6">Cytoplasm</location>
    </subcellularLocation>
</comment>
<comment type="domain">
    <text evidence="3">Has an N-terminal TIR domain and an C-terminal antiparallel beta-sheet.</text>
</comment>
<comment type="disruption phenotype">
    <text evidence="2">When this gene is missing the Thoeris system does not confer phage resistance in B.subtilis.</text>
</comment>
<comment type="similarity">
    <text evidence="6">Belongs to the Thoeris B TIR-like family.</text>
</comment>
<organism>
    <name type="scientific">Bacillus cereus (strain MSX-D12)</name>
    <dbReference type="NCBI Taxonomy" id="1053222"/>
    <lineage>
        <taxon>Bacteria</taxon>
        <taxon>Bacillati</taxon>
        <taxon>Bacillota</taxon>
        <taxon>Bacilli</taxon>
        <taxon>Bacillales</taxon>
        <taxon>Bacillaceae</taxon>
        <taxon>Bacillus</taxon>
        <taxon>Bacillus cereus group</taxon>
    </lineage>
</organism>